<keyword id="KW-0963">Cytoplasm</keyword>
<keyword id="KW-0444">Lipid biosynthesis</keyword>
<keyword id="KW-0443">Lipid metabolism</keyword>
<keyword id="KW-0520">NAD</keyword>
<keyword id="KW-0521">NADP</keyword>
<keyword id="KW-0547">Nucleotide-binding</keyword>
<keyword id="KW-0560">Oxidoreductase</keyword>
<keyword id="KW-0594">Phospholipid biosynthesis</keyword>
<keyword id="KW-1208">Phospholipid metabolism</keyword>
<keyword id="KW-1185">Reference proteome</keyword>
<name>GPDA_BAUCH</name>
<protein>
    <recommendedName>
        <fullName evidence="1">Glycerol-3-phosphate dehydrogenase [NAD(P)+]</fullName>
        <ecNumber evidence="1">1.1.1.94</ecNumber>
    </recommendedName>
    <alternativeName>
        <fullName evidence="1">NAD(P)(+)-dependent glycerol-3-phosphate dehydrogenase</fullName>
    </alternativeName>
    <alternativeName>
        <fullName evidence="1">NAD(P)H-dependent dihydroxyacetone-phosphate reductase</fullName>
    </alternativeName>
</protein>
<reference key="1">
    <citation type="journal article" date="2006" name="PLoS Biol.">
        <title>Metabolic complementarity and genomics of the dual bacterial symbiosis of sharpshooters.</title>
        <authorList>
            <person name="Wu D."/>
            <person name="Daugherty S.C."/>
            <person name="Van Aken S.E."/>
            <person name="Pai G.H."/>
            <person name="Watkins K.L."/>
            <person name="Khouri H."/>
            <person name="Tallon L.J."/>
            <person name="Zaborsky J.M."/>
            <person name="Dunbar H.E."/>
            <person name="Tran P.L."/>
            <person name="Moran N.A."/>
            <person name="Eisen J.A."/>
        </authorList>
    </citation>
    <scope>NUCLEOTIDE SEQUENCE [LARGE SCALE GENOMIC DNA]</scope>
</reference>
<gene>
    <name evidence="1" type="primary">gpsA</name>
    <name type="ordered locus">BCI_0173</name>
</gene>
<proteinExistence type="inferred from homology"/>
<comment type="function">
    <text evidence="1">Catalyzes the reduction of the glycolytic intermediate dihydroxyacetone phosphate (DHAP) to sn-glycerol 3-phosphate (G3P), the key precursor for phospholipid synthesis.</text>
</comment>
<comment type="catalytic activity">
    <reaction evidence="1">
        <text>sn-glycerol 3-phosphate + NAD(+) = dihydroxyacetone phosphate + NADH + H(+)</text>
        <dbReference type="Rhea" id="RHEA:11092"/>
        <dbReference type="ChEBI" id="CHEBI:15378"/>
        <dbReference type="ChEBI" id="CHEBI:57540"/>
        <dbReference type="ChEBI" id="CHEBI:57597"/>
        <dbReference type="ChEBI" id="CHEBI:57642"/>
        <dbReference type="ChEBI" id="CHEBI:57945"/>
        <dbReference type="EC" id="1.1.1.94"/>
    </reaction>
    <physiologicalReaction direction="right-to-left" evidence="1">
        <dbReference type="Rhea" id="RHEA:11094"/>
    </physiologicalReaction>
</comment>
<comment type="catalytic activity">
    <reaction evidence="1">
        <text>sn-glycerol 3-phosphate + NADP(+) = dihydroxyacetone phosphate + NADPH + H(+)</text>
        <dbReference type="Rhea" id="RHEA:11096"/>
        <dbReference type="ChEBI" id="CHEBI:15378"/>
        <dbReference type="ChEBI" id="CHEBI:57597"/>
        <dbReference type="ChEBI" id="CHEBI:57642"/>
        <dbReference type="ChEBI" id="CHEBI:57783"/>
        <dbReference type="ChEBI" id="CHEBI:58349"/>
        <dbReference type="EC" id="1.1.1.94"/>
    </reaction>
    <physiologicalReaction direction="right-to-left" evidence="1">
        <dbReference type="Rhea" id="RHEA:11098"/>
    </physiologicalReaction>
</comment>
<comment type="pathway">
    <text evidence="1">Membrane lipid metabolism; glycerophospholipid metabolism.</text>
</comment>
<comment type="subcellular location">
    <subcellularLocation>
        <location evidence="1">Cytoplasm</location>
    </subcellularLocation>
</comment>
<comment type="similarity">
    <text evidence="1">Belongs to the NAD-dependent glycerol-3-phosphate dehydrogenase family.</text>
</comment>
<feature type="chain" id="PRO_0000255283" description="Glycerol-3-phosphate dehydrogenase [NAD(P)+]">
    <location>
        <begin position="1"/>
        <end position="340"/>
    </location>
</feature>
<feature type="active site" description="Proton acceptor" evidence="1">
    <location>
        <position position="195"/>
    </location>
</feature>
<feature type="binding site" evidence="1">
    <location>
        <position position="15"/>
    </location>
    <ligand>
        <name>NADPH</name>
        <dbReference type="ChEBI" id="CHEBI:57783"/>
    </ligand>
</feature>
<feature type="binding site" evidence="1">
    <location>
        <position position="16"/>
    </location>
    <ligand>
        <name>NADPH</name>
        <dbReference type="ChEBI" id="CHEBI:57783"/>
    </ligand>
</feature>
<feature type="binding site" evidence="1">
    <location>
        <position position="36"/>
    </location>
    <ligand>
        <name>NADPH</name>
        <dbReference type="ChEBI" id="CHEBI:57783"/>
    </ligand>
</feature>
<feature type="binding site" evidence="1">
    <location>
        <position position="110"/>
    </location>
    <ligand>
        <name>NADPH</name>
        <dbReference type="ChEBI" id="CHEBI:57783"/>
    </ligand>
</feature>
<feature type="binding site" evidence="1">
    <location>
        <position position="110"/>
    </location>
    <ligand>
        <name>sn-glycerol 3-phosphate</name>
        <dbReference type="ChEBI" id="CHEBI:57597"/>
    </ligand>
</feature>
<feature type="binding site" evidence="1">
    <location>
        <position position="139"/>
    </location>
    <ligand>
        <name>sn-glycerol 3-phosphate</name>
        <dbReference type="ChEBI" id="CHEBI:57597"/>
    </ligand>
</feature>
<feature type="binding site" evidence="1">
    <location>
        <position position="141"/>
    </location>
    <ligand>
        <name>sn-glycerol 3-phosphate</name>
        <dbReference type="ChEBI" id="CHEBI:57597"/>
    </ligand>
</feature>
<feature type="binding site" evidence="1">
    <location>
        <position position="143"/>
    </location>
    <ligand>
        <name>NADPH</name>
        <dbReference type="ChEBI" id="CHEBI:57783"/>
    </ligand>
</feature>
<feature type="binding site" evidence="1">
    <location>
        <position position="195"/>
    </location>
    <ligand>
        <name>sn-glycerol 3-phosphate</name>
        <dbReference type="ChEBI" id="CHEBI:57597"/>
    </ligand>
</feature>
<feature type="binding site" evidence="1">
    <location>
        <position position="248"/>
    </location>
    <ligand>
        <name>sn-glycerol 3-phosphate</name>
        <dbReference type="ChEBI" id="CHEBI:57597"/>
    </ligand>
</feature>
<feature type="binding site" evidence="1">
    <location>
        <position position="258"/>
    </location>
    <ligand>
        <name>sn-glycerol 3-phosphate</name>
        <dbReference type="ChEBI" id="CHEBI:57597"/>
    </ligand>
</feature>
<feature type="binding site" evidence="1">
    <location>
        <position position="259"/>
    </location>
    <ligand>
        <name>NADPH</name>
        <dbReference type="ChEBI" id="CHEBI:57783"/>
    </ligand>
</feature>
<feature type="binding site" evidence="1">
    <location>
        <position position="259"/>
    </location>
    <ligand>
        <name>sn-glycerol 3-phosphate</name>
        <dbReference type="ChEBI" id="CHEBI:57597"/>
    </ligand>
</feature>
<feature type="binding site" evidence="1">
    <location>
        <position position="260"/>
    </location>
    <ligand>
        <name>sn-glycerol 3-phosphate</name>
        <dbReference type="ChEBI" id="CHEBI:57597"/>
    </ligand>
</feature>
<feature type="binding site" evidence="1">
    <location>
        <position position="283"/>
    </location>
    <ligand>
        <name>NADPH</name>
        <dbReference type="ChEBI" id="CHEBI:57783"/>
    </ligand>
</feature>
<feature type="binding site" evidence="1">
    <location>
        <position position="285"/>
    </location>
    <ligand>
        <name>NADPH</name>
        <dbReference type="ChEBI" id="CHEBI:57783"/>
    </ligand>
</feature>
<evidence type="ECO:0000255" key="1">
    <source>
        <dbReference type="HAMAP-Rule" id="MF_00394"/>
    </source>
</evidence>
<organism>
    <name type="scientific">Baumannia cicadellinicola subsp. Homalodisca coagulata</name>
    <dbReference type="NCBI Taxonomy" id="374463"/>
    <lineage>
        <taxon>Bacteria</taxon>
        <taxon>Pseudomonadati</taxon>
        <taxon>Pseudomonadota</taxon>
        <taxon>Gammaproteobacteria</taxon>
        <taxon>Candidatus Palibaumannia</taxon>
    </lineage>
</organism>
<accession>Q1LTT0</accession>
<dbReference type="EC" id="1.1.1.94" evidence="1"/>
<dbReference type="EMBL" id="CP000238">
    <property type="protein sequence ID" value="ABF14290.1"/>
    <property type="molecule type" value="Genomic_DNA"/>
</dbReference>
<dbReference type="RefSeq" id="WP_011520367.1">
    <property type="nucleotide sequence ID" value="NC_007984.1"/>
</dbReference>
<dbReference type="SMR" id="Q1LTT0"/>
<dbReference type="STRING" id="374463.BCI_0173"/>
<dbReference type="KEGG" id="bci:BCI_0173"/>
<dbReference type="HOGENOM" id="CLU_033449_0_2_6"/>
<dbReference type="OrthoDB" id="9812273at2"/>
<dbReference type="UniPathway" id="UPA00940"/>
<dbReference type="Proteomes" id="UP000002427">
    <property type="component" value="Chromosome"/>
</dbReference>
<dbReference type="GO" id="GO:0005829">
    <property type="term" value="C:cytosol"/>
    <property type="evidence" value="ECO:0007669"/>
    <property type="project" value="TreeGrafter"/>
</dbReference>
<dbReference type="GO" id="GO:0047952">
    <property type="term" value="F:glycerol-3-phosphate dehydrogenase [NAD(P)+] activity"/>
    <property type="evidence" value="ECO:0007669"/>
    <property type="project" value="UniProtKB-UniRule"/>
</dbReference>
<dbReference type="GO" id="GO:0051287">
    <property type="term" value="F:NAD binding"/>
    <property type="evidence" value="ECO:0007669"/>
    <property type="project" value="InterPro"/>
</dbReference>
<dbReference type="GO" id="GO:0005975">
    <property type="term" value="P:carbohydrate metabolic process"/>
    <property type="evidence" value="ECO:0007669"/>
    <property type="project" value="InterPro"/>
</dbReference>
<dbReference type="GO" id="GO:0046167">
    <property type="term" value="P:glycerol-3-phosphate biosynthetic process"/>
    <property type="evidence" value="ECO:0007669"/>
    <property type="project" value="UniProtKB-UniRule"/>
</dbReference>
<dbReference type="GO" id="GO:0046168">
    <property type="term" value="P:glycerol-3-phosphate catabolic process"/>
    <property type="evidence" value="ECO:0007669"/>
    <property type="project" value="InterPro"/>
</dbReference>
<dbReference type="GO" id="GO:0046474">
    <property type="term" value="P:glycerophospholipid biosynthetic process"/>
    <property type="evidence" value="ECO:0007669"/>
    <property type="project" value="TreeGrafter"/>
</dbReference>
<dbReference type="FunFam" id="1.10.1040.10:FF:000001">
    <property type="entry name" value="Glycerol-3-phosphate dehydrogenase [NAD(P)+]"/>
    <property type="match status" value="1"/>
</dbReference>
<dbReference type="FunFam" id="3.40.50.720:FF:000019">
    <property type="entry name" value="Glycerol-3-phosphate dehydrogenase [NAD(P)+]"/>
    <property type="match status" value="1"/>
</dbReference>
<dbReference type="Gene3D" id="1.10.1040.10">
    <property type="entry name" value="N-(1-d-carboxylethyl)-l-norvaline Dehydrogenase, domain 2"/>
    <property type="match status" value="1"/>
</dbReference>
<dbReference type="Gene3D" id="3.40.50.720">
    <property type="entry name" value="NAD(P)-binding Rossmann-like Domain"/>
    <property type="match status" value="1"/>
</dbReference>
<dbReference type="HAMAP" id="MF_00394">
    <property type="entry name" value="NAD_Glyc3P_dehydrog"/>
    <property type="match status" value="1"/>
</dbReference>
<dbReference type="InterPro" id="IPR008927">
    <property type="entry name" value="6-PGluconate_DH-like_C_sf"/>
</dbReference>
<dbReference type="InterPro" id="IPR013328">
    <property type="entry name" value="6PGD_dom2"/>
</dbReference>
<dbReference type="InterPro" id="IPR006168">
    <property type="entry name" value="G3P_DH_NAD-dep"/>
</dbReference>
<dbReference type="InterPro" id="IPR006109">
    <property type="entry name" value="G3P_DH_NAD-dep_C"/>
</dbReference>
<dbReference type="InterPro" id="IPR011128">
    <property type="entry name" value="G3P_DH_NAD-dep_N"/>
</dbReference>
<dbReference type="InterPro" id="IPR036291">
    <property type="entry name" value="NAD(P)-bd_dom_sf"/>
</dbReference>
<dbReference type="NCBIfam" id="NF000939">
    <property type="entry name" value="PRK00094.1-1"/>
    <property type="match status" value="1"/>
</dbReference>
<dbReference type="NCBIfam" id="NF000940">
    <property type="entry name" value="PRK00094.1-2"/>
    <property type="match status" value="1"/>
</dbReference>
<dbReference type="NCBIfam" id="NF000942">
    <property type="entry name" value="PRK00094.1-4"/>
    <property type="match status" value="1"/>
</dbReference>
<dbReference type="PANTHER" id="PTHR11728">
    <property type="entry name" value="GLYCEROL-3-PHOSPHATE DEHYDROGENASE"/>
    <property type="match status" value="1"/>
</dbReference>
<dbReference type="PANTHER" id="PTHR11728:SF1">
    <property type="entry name" value="GLYCEROL-3-PHOSPHATE DEHYDROGENASE [NAD(+)] 2, CHLOROPLASTIC"/>
    <property type="match status" value="1"/>
</dbReference>
<dbReference type="Pfam" id="PF07479">
    <property type="entry name" value="NAD_Gly3P_dh_C"/>
    <property type="match status" value="1"/>
</dbReference>
<dbReference type="Pfam" id="PF01210">
    <property type="entry name" value="NAD_Gly3P_dh_N"/>
    <property type="match status" value="1"/>
</dbReference>
<dbReference type="PIRSF" id="PIRSF000114">
    <property type="entry name" value="Glycerol-3-P_dh"/>
    <property type="match status" value="1"/>
</dbReference>
<dbReference type="PRINTS" id="PR00077">
    <property type="entry name" value="GPDHDRGNASE"/>
</dbReference>
<dbReference type="SUPFAM" id="SSF48179">
    <property type="entry name" value="6-phosphogluconate dehydrogenase C-terminal domain-like"/>
    <property type="match status" value="1"/>
</dbReference>
<dbReference type="SUPFAM" id="SSF51735">
    <property type="entry name" value="NAD(P)-binding Rossmann-fold domains"/>
    <property type="match status" value="1"/>
</dbReference>
<dbReference type="PROSITE" id="PS00957">
    <property type="entry name" value="NAD_G3PDH"/>
    <property type="match status" value="1"/>
</dbReference>
<sequence length="340" mass="36364">MSAVITSMIVIGAGSYGTALAITLARNGNKVLLWGHDPVHVQAMKVARCNHAFLPNVIFPSTLYLETSLPVALTASRNVLIVVPSNVFGSVLTRIKPHLRPDARIVWATKGLEMNTGRLLQDVARDILGGHIPLAVISGPTFARELAAGLPTAIAIAATDVTFSADLQQLLHCSKSLLVECNIDFIGVQLGGALKNIIAIGAGISDGLGFGANARAALITRGLAEISRLGKAMGATPSTFMGMAGLGDLVLTCTDNQSRNRRFGILIGQGIEVQTAQKNIGLVVEGYTNTKDVLKLASRYRVVMPITEQLYQILYHNKNVYDAALTLLGRYYKDKQISYL</sequence>